<protein>
    <recommendedName>
        <fullName evidence="1">Nucleoside diphosphate kinase</fullName>
        <shortName evidence="1">NDK</shortName>
        <shortName evidence="1">NDP kinase</shortName>
        <ecNumber evidence="1">2.7.4.6</ecNumber>
    </recommendedName>
    <alternativeName>
        <fullName evidence="1">Nucleoside-2-P kinase</fullName>
    </alternativeName>
</protein>
<proteinExistence type="inferred from homology"/>
<name>NDK_METS4</name>
<reference key="1">
    <citation type="submission" date="2008-02" db="EMBL/GenBank/DDBJ databases">
        <title>Complete sequence of chromosome of Methylobacterium sp. 4-46.</title>
        <authorList>
            <consortium name="US DOE Joint Genome Institute"/>
            <person name="Copeland A."/>
            <person name="Lucas S."/>
            <person name="Lapidus A."/>
            <person name="Glavina del Rio T."/>
            <person name="Dalin E."/>
            <person name="Tice H."/>
            <person name="Bruce D."/>
            <person name="Goodwin L."/>
            <person name="Pitluck S."/>
            <person name="Chertkov O."/>
            <person name="Brettin T."/>
            <person name="Detter J.C."/>
            <person name="Han C."/>
            <person name="Kuske C.R."/>
            <person name="Schmutz J."/>
            <person name="Larimer F."/>
            <person name="Land M."/>
            <person name="Hauser L."/>
            <person name="Kyrpides N."/>
            <person name="Ivanova N."/>
            <person name="Marx C.J."/>
            <person name="Richardson P."/>
        </authorList>
    </citation>
    <scope>NUCLEOTIDE SEQUENCE [LARGE SCALE GENOMIC DNA]</scope>
    <source>
        <strain>4-46</strain>
    </source>
</reference>
<accession>B0UIS8</accession>
<keyword id="KW-0067">ATP-binding</keyword>
<keyword id="KW-0963">Cytoplasm</keyword>
<keyword id="KW-0418">Kinase</keyword>
<keyword id="KW-0460">Magnesium</keyword>
<keyword id="KW-0479">Metal-binding</keyword>
<keyword id="KW-0546">Nucleotide metabolism</keyword>
<keyword id="KW-0547">Nucleotide-binding</keyword>
<keyword id="KW-0597">Phosphoprotein</keyword>
<keyword id="KW-0808">Transferase</keyword>
<organism>
    <name type="scientific">Methylobacterium sp. (strain 4-46)</name>
    <dbReference type="NCBI Taxonomy" id="426117"/>
    <lineage>
        <taxon>Bacteria</taxon>
        <taxon>Pseudomonadati</taxon>
        <taxon>Pseudomonadota</taxon>
        <taxon>Alphaproteobacteria</taxon>
        <taxon>Hyphomicrobiales</taxon>
        <taxon>Methylobacteriaceae</taxon>
        <taxon>Methylobacterium</taxon>
    </lineage>
</organism>
<sequence>MAIERTFSILKPDATARNLTGAINAVIEEAGLRIVAQRRIRMSEAQAKTFYEVHAERPFYGELVSFMTSGPVVVQVLEGDNAVAKYREVMGATNPAQAAEGTIRKRFAVSVGENSVHGSDSAENAAIEIAQFFTEADIVG</sequence>
<comment type="function">
    <text evidence="1">Major role in the synthesis of nucleoside triphosphates other than ATP. The ATP gamma phosphate is transferred to the NDP beta phosphate via a ping-pong mechanism, using a phosphorylated active-site intermediate.</text>
</comment>
<comment type="catalytic activity">
    <reaction evidence="1">
        <text>a 2'-deoxyribonucleoside 5'-diphosphate + ATP = a 2'-deoxyribonucleoside 5'-triphosphate + ADP</text>
        <dbReference type="Rhea" id="RHEA:44640"/>
        <dbReference type="ChEBI" id="CHEBI:30616"/>
        <dbReference type="ChEBI" id="CHEBI:61560"/>
        <dbReference type="ChEBI" id="CHEBI:73316"/>
        <dbReference type="ChEBI" id="CHEBI:456216"/>
        <dbReference type="EC" id="2.7.4.6"/>
    </reaction>
</comment>
<comment type="catalytic activity">
    <reaction evidence="1">
        <text>a ribonucleoside 5'-diphosphate + ATP = a ribonucleoside 5'-triphosphate + ADP</text>
        <dbReference type="Rhea" id="RHEA:18113"/>
        <dbReference type="ChEBI" id="CHEBI:30616"/>
        <dbReference type="ChEBI" id="CHEBI:57930"/>
        <dbReference type="ChEBI" id="CHEBI:61557"/>
        <dbReference type="ChEBI" id="CHEBI:456216"/>
        <dbReference type="EC" id="2.7.4.6"/>
    </reaction>
</comment>
<comment type="cofactor">
    <cofactor evidence="1">
        <name>Mg(2+)</name>
        <dbReference type="ChEBI" id="CHEBI:18420"/>
    </cofactor>
</comment>
<comment type="subunit">
    <text evidence="1">Homotetramer.</text>
</comment>
<comment type="subcellular location">
    <subcellularLocation>
        <location evidence="1">Cytoplasm</location>
    </subcellularLocation>
</comment>
<comment type="similarity">
    <text evidence="1">Belongs to the NDK family.</text>
</comment>
<dbReference type="EC" id="2.7.4.6" evidence="1"/>
<dbReference type="EMBL" id="CP000943">
    <property type="protein sequence ID" value="ACA18704.1"/>
    <property type="molecule type" value="Genomic_DNA"/>
</dbReference>
<dbReference type="RefSeq" id="WP_012334093.1">
    <property type="nucleotide sequence ID" value="NC_010511.1"/>
</dbReference>
<dbReference type="SMR" id="B0UIS8"/>
<dbReference type="STRING" id="426117.M446_4361"/>
<dbReference type="KEGG" id="met:M446_4361"/>
<dbReference type="eggNOG" id="COG0105">
    <property type="taxonomic scope" value="Bacteria"/>
</dbReference>
<dbReference type="HOGENOM" id="CLU_060216_8_1_5"/>
<dbReference type="GO" id="GO:0005737">
    <property type="term" value="C:cytoplasm"/>
    <property type="evidence" value="ECO:0007669"/>
    <property type="project" value="UniProtKB-SubCell"/>
</dbReference>
<dbReference type="GO" id="GO:0005524">
    <property type="term" value="F:ATP binding"/>
    <property type="evidence" value="ECO:0007669"/>
    <property type="project" value="UniProtKB-UniRule"/>
</dbReference>
<dbReference type="GO" id="GO:0046872">
    <property type="term" value="F:metal ion binding"/>
    <property type="evidence" value="ECO:0007669"/>
    <property type="project" value="UniProtKB-KW"/>
</dbReference>
<dbReference type="GO" id="GO:0004550">
    <property type="term" value="F:nucleoside diphosphate kinase activity"/>
    <property type="evidence" value="ECO:0007669"/>
    <property type="project" value="UniProtKB-UniRule"/>
</dbReference>
<dbReference type="GO" id="GO:0006241">
    <property type="term" value="P:CTP biosynthetic process"/>
    <property type="evidence" value="ECO:0007669"/>
    <property type="project" value="UniProtKB-UniRule"/>
</dbReference>
<dbReference type="GO" id="GO:0006183">
    <property type="term" value="P:GTP biosynthetic process"/>
    <property type="evidence" value="ECO:0007669"/>
    <property type="project" value="UniProtKB-UniRule"/>
</dbReference>
<dbReference type="GO" id="GO:0006228">
    <property type="term" value="P:UTP biosynthetic process"/>
    <property type="evidence" value="ECO:0007669"/>
    <property type="project" value="UniProtKB-UniRule"/>
</dbReference>
<dbReference type="CDD" id="cd04413">
    <property type="entry name" value="NDPk_I"/>
    <property type="match status" value="1"/>
</dbReference>
<dbReference type="FunFam" id="3.30.70.141:FF:000003">
    <property type="entry name" value="Nucleoside diphosphate kinase"/>
    <property type="match status" value="1"/>
</dbReference>
<dbReference type="Gene3D" id="3.30.70.141">
    <property type="entry name" value="Nucleoside diphosphate kinase-like domain"/>
    <property type="match status" value="1"/>
</dbReference>
<dbReference type="HAMAP" id="MF_00451">
    <property type="entry name" value="NDP_kinase"/>
    <property type="match status" value="1"/>
</dbReference>
<dbReference type="InterPro" id="IPR034907">
    <property type="entry name" value="NDK-like_dom"/>
</dbReference>
<dbReference type="InterPro" id="IPR036850">
    <property type="entry name" value="NDK-like_dom_sf"/>
</dbReference>
<dbReference type="InterPro" id="IPR001564">
    <property type="entry name" value="Nucleoside_diP_kinase"/>
</dbReference>
<dbReference type="NCBIfam" id="NF001908">
    <property type="entry name" value="PRK00668.1"/>
    <property type="match status" value="1"/>
</dbReference>
<dbReference type="PANTHER" id="PTHR46161">
    <property type="entry name" value="NUCLEOSIDE DIPHOSPHATE KINASE"/>
    <property type="match status" value="1"/>
</dbReference>
<dbReference type="PANTHER" id="PTHR46161:SF3">
    <property type="entry name" value="NUCLEOSIDE DIPHOSPHATE KINASE DDB_G0292928-RELATED"/>
    <property type="match status" value="1"/>
</dbReference>
<dbReference type="Pfam" id="PF00334">
    <property type="entry name" value="NDK"/>
    <property type="match status" value="1"/>
</dbReference>
<dbReference type="PRINTS" id="PR01243">
    <property type="entry name" value="NUCDPKINASE"/>
</dbReference>
<dbReference type="SMART" id="SM00562">
    <property type="entry name" value="NDK"/>
    <property type="match status" value="1"/>
</dbReference>
<dbReference type="SUPFAM" id="SSF54919">
    <property type="entry name" value="Nucleoside diphosphate kinase, NDK"/>
    <property type="match status" value="1"/>
</dbReference>
<dbReference type="PROSITE" id="PS51374">
    <property type="entry name" value="NDPK_LIKE"/>
    <property type="match status" value="1"/>
</dbReference>
<evidence type="ECO:0000255" key="1">
    <source>
        <dbReference type="HAMAP-Rule" id="MF_00451"/>
    </source>
</evidence>
<feature type="chain" id="PRO_1000192272" description="Nucleoside diphosphate kinase">
    <location>
        <begin position="1"/>
        <end position="140"/>
    </location>
</feature>
<feature type="active site" description="Pros-phosphohistidine intermediate" evidence="1">
    <location>
        <position position="117"/>
    </location>
</feature>
<feature type="binding site" evidence="1">
    <location>
        <position position="11"/>
    </location>
    <ligand>
        <name>ATP</name>
        <dbReference type="ChEBI" id="CHEBI:30616"/>
    </ligand>
</feature>
<feature type="binding site" evidence="1">
    <location>
        <position position="59"/>
    </location>
    <ligand>
        <name>ATP</name>
        <dbReference type="ChEBI" id="CHEBI:30616"/>
    </ligand>
</feature>
<feature type="binding site" evidence="1">
    <location>
        <position position="87"/>
    </location>
    <ligand>
        <name>ATP</name>
        <dbReference type="ChEBI" id="CHEBI:30616"/>
    </ligand>
</feature>
<feature type="binding site" evidence="1">
    <location>
        <position position="93"/>
    </location>
    <ligand>
        <name>ATP</name>
        <dbReference type="ChEBI" id="CHEBI:30616"/>
    </ligand>
</feature>
<feature type="binding site" evidence="1">
    <location>
        <position position="104"/>
    </location>
    <ligand>
        <name>ATP</name>
        <dbReference type="ChEBI" id="CHEBI:30616"/>
    </ligand>
</feature>
<feature type="binding site" evidence="1">
    <location>
        <position position="114"/>
    </location>
    <ligand>
        <name>ATP</name>
        <dbReference type="ChEBI" id="CHEBI:30616"/>
    </ligand>
</feature>
<gene>
    <name evidence="1" type="primary">ndk</name>
    <name type="ordered locus">M446_4361</name>
</gene>